<evidence type="ECO:0000255" key="1">
    <source>
        <dbReference type="HAMAP-Rule" id="MF_00294"/>
    </source>
</evidence>
<evidence type="ECO:0000305" key="2"/>
<keyword id="KW-0687">Ribonucleoprotein</keyword>
<keyword id="KW-0689">Ribosomal protein</keyword>
<name>RL33_MOOTA</name>
<feature type="chain" id="PRO_0000356542" description="Large ribosomal subunit protein bL33">
    <location>
        <begin position="1"/>
        <end position="49"/>
    </location>
</feature>
<protein>
    <recommendedName>
        <fullName evidence="1">Large ribosomal subunit protein bL33</fullName>
    </recommendedName>
    <alternativeName>
        <fullName evidence="2">50S ribosomal protein L33</fullName>
    </alternativeName>
</protein>
<comment type="similarity">
    <text evidence="1">Belongs to the bacterial ribosomal protein bL33 family.</text>
</comment>
<gene>
    <name evidence="1" type="primary">rpmG</name>
    <name type="ordered locus">Moth_2475</name>
</gene>
<sequence>MRVGITLACTECKRRNYISTKNKKNDPDRIELKKYCSFCGRHTVHKETK</sequence>
<reference key="1">
    <citation type="journal article" date="2008" name="Environ. Microbiol.">
        <title>The complete genome sequence of Moorella thermoacetica (f. Clostridium thermoaceticum).</title>
        <authorList>
            <person name="Pierce E."/>
            <person name="Xie G."/>
            <person name="Barabote R.D."/>
            <person name="Saunders E."/>
            <person name="Han C.S."/>
            <person name="Detter J.C."/>
            <person name="Richardson P."/>
            <person name="Brettin T.S."/>
            <person name="Das A."/>
            <person name="Ljungdahl L.G."/>
            <person name="Ragsdale S.W."/>
        </authorList>
    </citation>
    <scope>NUCLEOTIDE SEQUENCE [LARGE SCALE GENOMIC DNA]</scope>
    <source>
        <strain>ATCC 39073 / JCM 9320</strain>
    </source>
</reference>
<accession>Q2RFN2</accession>
<dbReference type="EMBL" id="CP000232">
    <property type="protein sequence ID" value="ABC20757.1"/>
    <property type="molecule type" value="Genomic_DNA"/>
</dbReference>
<dbReference type="RefSeq" id="YP_431300.1">
    <property type="nucleotide sequence ID" value="NC_007644.1"/>
</dbReference>
<dbReference type="SMR" id="Q2RFN2"/>
<dbReference type="STRING" id="264732.Moth_2475"/>
<dbReference type="EnsemblBacteria" id="ABC20757">
    <property type="protein sequence ID" value="ABC20757"/>
    <property type="gene ID" value="Moth_2475"/>
</dbReference>
<dbReference type="KEGG" id="mta:Moth_2475"/>
<dbReference type="PATRIC" id="fig|264732.11.peg.2693"/>
<dbReference type="eggNOG" id="COG0267">
    <property type="taxonomic scope" value="Bacteria"/>
</dbReference>
<dbReference type="HOGENOM" id="CLU_190949_0_2_9"/>
<dbReference type="OrthoDB" id="9801333at2"/>
<dbReference type="GO" id="GO:0005737">
    <property type="term" value="C:cytoplasm"/>
    <property type="evidence" value="ECO:0007669"/>
    <property type="project" value="UniProtKB-ARBA"/>
</dbReference>
<dbReference type="GO" id="GO:1990904">
    <property type="term" value="C:ribonucleoprotein complex"/>
    <property type="evidence" value="ECO:0007669"/>
    <property type="project" value="UniProtKB-KW"/>
</dbReference>
<dbReference type="GO" id="GO:0005840">
    <property type="term" value="C:ribosome"/>
    <property type="evidence" value="ECO:0007669"/>
    <property type="project" value="UniProtKB-KW"/>
</dbReference>
<dbReference type="GO" id="GO:0003735">
    <property type="term" value="F:structural constituent of ribosome"/>
    <property type="evidence" value="ECO:0007669"/>
    <property type="project" value="InterPro"/>
</dbReference>
<dbReference type="GO" id="GO:0006412">
    <property type="term" value="P:translation"/>
    <property type="evidence" value="ECO:0007669"/>
    <property type="project" value="UniProtKB-UniRule"/>
</dbReference>
<dbReference type="Gene3D" id="2.20.28.120">
    <property type="entry name" value="Ribosomal protein L33"/>
    <property type="match status" value="1"/>
</dbReference>
<dbReference type="HAMAP" id="MF_00294">
    <property type="entry name" value="Ribosomal_bL33"/>
    <property type="match status" value="1"/>
</dbReference>
<dbReference type="InterPro" id="IPR001705">
    <property type="entry name" value="Ribosomal_bL33"/>
</dbReference>
<dbReference type="InterPro" id="IPR018264">
    <property type="entry name" value="Ribosomal_bL33_CS"/>
</dbReference>
<dbReference type="InterPro" id="IPR038584">
    <property type="entry name" value="Ribosomal_bL33_sf"/>
</dbReference>
<dbReference type="InterPro" id="IPR011332">
    <property type="entry name" value="Ribosomal_zn-bd"/>
</dbReference>
<dbReference type="NCBIfam" id="NF001764">
    <property type="entry name" value="PRK00504.1"/>
    <property type="match status" value="1"/>
</dbReference>
<dbReference type="NCBIfam" id="NF001860">
    <property type="entry name" value="PRK00595.1"/>
    <property type="match status" value="1"/>
</dbReference>
<dbReference type="NCBIfam" id="TIGR01023">
    <property type="entry name" value="rpmG_bact"/>
    <property type="match status" value="1"/>
</dbReference>
<dbReference type="PANTHER" id="PTHR43168">
    <property type="entry name" value="50S RIBOSOMAL PROTEIN L33, CHLOROPLASTIC"/>
    <property type="match status" value="1"/>
</dbReference>
<dbReference type="PANTHER" id="PTHR43168:SF2">
    <property type="entry name" value="LARGE RIBOSOMAL SUBUNIT PROTEIN BL33C"/>
    <property type="match status" value="1"/>
</dbReference>
<dbReference type="Pfam" id="PF00471">
    <property type="entry name" value="Ribosomal_L33"/>
    <property type="match status" value="1"/>
</dbReference>
<dbReference type="SUPFAM" id="SSF57829">
    <property type="entry name" value="Zn-binding ribosomal proteins"/>
    <property type="match status" value="1"/>
</dbReference>
<dbReference type="PROSITE" id="PS00582">
    <property type="entry name" value="RIBOSOMAL_L33"/>
    <property type="match status" value="1"/>
</dbReference>
<organism>
    <name type="scientific">Moorella thermoacetica (strain ATCC 39073 / JCM 9320)</name>
    <dbReference type="NCBI Taxonomy" id="264732"/>
    <lineage>
        <taxon>Bacteria</taxon>
        <taxon>Bacillati</taxon>
        <taxon>Bacillota</taxon>
        <taxon>Clostridia</taxon>
        <taxon>Moorellales</taxon>
        <taxon>Moorellaceae</taxon>
        <taxon>Moorella</taxon>
    </lineage>
</organism>
<proteinExistence type="inferred from homology"/>